<comment type="function">
    <text evidence="2 3 4 6">ADP-ribosylates eukaryotic Rho and Rac proteins on an asparagine residue.</text>
</comment>
<comment type="catalytic activity">
    <reaction evidence="3">
        <text>L-asparaginyl-[protein] + NAD(+) = N(4)-(ADP-D-ribosyl)-L-asparaginyl-[protein] + nicotinamide + H(+)</text>
        <dbReference type="Rhea" id="RHEA:58228"/>
        <dbReference type="Rhea" id="RHEA-COMP:12804"/>
        <dbReference type="Rhea" id="RHEA-COMP:15090"/>
        <dbReference type="ChEBI" id="CHEBI:15378"/>
        <dbReference type="ChEBI" id="CHEBI:17154"/>
        <dbReference type="ChEBI" id="CHEBI:50347"/>
        <dbReference type="ChEBI" id="CHEBI:57540"/>
        <dbReference type="ChEBI" id="CHEBI:142555"/>
    </reaction>
</comment>
<comment type="subunit">
    <text evidence="3 5 6">Monomer (PubMed:12029083). Interacts with human RALA (PubMed:15809419, PubMed:16177825).</text>
</comment>
<comment type="subcellular location">
    <subcellularLocation>
        <location evidence="7">Secreted</location>
    </subcellularLocation>
</comment>
<comment type="similarity">
    <text evidence="8">To exoenzymes 3 of C.limosum and C.botulinum C phage, and to S.aureus ediN.</text>
</comment>
<accession>P15879</accession>
<evidence type="ECO:0000255" key="1">
    <source>
        <dbReference type="PROSITE-ProRule" id="PRU01340"/>
    </source>
</evidence>
<evidence type="ECO:0000269" key="2">
    <source>
    </source>
</evidence>
<evidence type="ECO:0000269" key="3">
    <source>
    </source>
</evidence>
<evidence type="ECO:0000269" key="4">
    <source>
    </source>
</evidence>
<evidence type="ECO:0000269" key="5">
    <source>
    </source>
</evidence>
<evidence type="ECO:0000269" key="6">
    <source>
    </source>
</evidence>
<evidence type="ECO:0000269" key="7">
    <source>
    </source>
</evidence>
<evidence type="ECO:0000305" key="8"/>
<evidence type="ECO:0007829" key="9">
    <source>
        <dbReference type="PDB" id="1G24"/>
    </source>
</evidence>
<evidence type="ECO:0007829" key="10">
    <source>
        <dbReference type="PDB" id="2A9K"/>
    </source>
</evidence>
<evidence type="ECO:0007829" key="11">
    <source>
        <dbReference type="PDB" id="2C8B"/>
    </source>
</evidence>
<organism>
    <name type="scientific">Clostridium botulinum D phage</name>
    <name type="common">Clostridium botulinum D bacteriophage</name>
    <dbReference type="NCBI Taxonomy" id="29342"/>
    <lineage>
        <taxon>Viruses</taxon>
        <taxon>Duplodnaviria</taxon>
        <taxon>Heunggongvirae</taxon>
        <taxon>Uroviricota</taxon>
        <taxon>Caudoviricetes</taxon>
    </lineage>
</organism>
<protein>
    <recommendedName>
        <fullName>Mono-ADP-ribosyltransferase C3</fullName>
        <ecNumber evidence="3">2.4.2.-</ecNumber>
    </recommendedName>
    <alternativeName>
        <fullName>Exoenzyme C3</fullName>
    </alternativeName>
</protein>
<reference key="1">
    <citation type="journal article" date="1990" name="Nucleic Acids Res.">
        <title>DNA sequence of exoenzyme C3, an ADP-ribosyltransferase encoded by Clostridium botulinum C and D phages.</title>
        <authorList>
            <person name="Popoff M.R."/>
            <person name="Boquet P."/>
            <person name="Gill D.M."/>
            <person name="Eklund M.W."/>
        </authorList>
    </citation>
    <scope>NUCLEOTIDE SEQUENCE [GENOMIC DNA] OF 34-251</scope>
    <scope>PROTEIN SEQUENCE OF 41-66</scope>
    <source>
        <strain>1873</strain>
    </source>
</reference>
<reference key="2">
    <citation type="journal article" date="1991" name="Infect. Immun.">
        <title>Characterization of the C3 gene of Clostridium botulinum types C and D and its expression in Escherichia coli.</title>
        <authorList>
            <person name="Popoff M.R."/>
            <person name="Hauser D."/>
            <person name="Boquet P."/>
            <person name="Eklund M.W."/>
            <person name="Gill D.M."/>
        </authorList>
    </citation>
    <scope>NUCLEOTIDE SEQUENCE [GENOMIC DNA] OF 1-59</scope>
    <source>
        <strain>1873</strain>
    </source>
</reference>
<reference key="3">
    <citation type="journal article" date="1991" name="J. Bacteriol.">
        <title>Purification and characterization of ADP-ribosyltransferases (exoenzyme C3) of Clostridium botulinum type C and D strains.</title>
        <authorList>
            <person name="Moriishi K."/>
            <person name="Syuto B."/>
            <person name="Yokosawa N."/>
            <person name="Oguma K."/>
            <person name="Saito M."/>
        </authorList>
    </citation>
    <scope>NUCLEOTIDE SEQUENCE [GENOMIC DNA] OF 41-60</scope>
    <source>
        <strain>1873</strain>
    </source>
</reference>
<reference key="4">
    <citation type="journal article" date="2001" name="J. Mol. Biol.">
        <title>Crystal structure and novel recognition motif of rho ADP-ribosylating C3 exoenzyme from Clostridium botulinum: structural insights for recognition specificity and catalysis.</title>
        <authorList>
            <person name="Han S."/>
            <person name="Arvai A.S."/>
            <person name="Clancy S.B."/>
            <person name="Tainer J.A."/>
        </authorList>
    </citation>
    <scope>X-RAY CRYSTALLOGRAPHY (1.7 ANGSTROMS) OF 41-251</scope>
    <scope>FUNCTION</scope>
</reference>
<reference key="5">
    <citation type="journal article" date="2002" name="J. Biol. Chem.">
        <title>NAD binding induces conformational changes in Rho ADP-ribosylating clostridium botulinum C3 exoenzyme.</title>
        <authorList>
            <person name="Menetrey J."/>
            <person name="Flatau G."/>
            <person name="Stura E.A."/>
            <person name="Charbonnier J.-B."/>
            <person name="Gas F."/>
            <person name="Teulon J.-M."/>
            <person name="Le Du M.-H."/>
            <person name="Boquet P."/>
            <person name="Menez A."/>
        </authorList>
    </citation>
    <scope>X-RAY CRYSTALLOGRAPHY (1.95 ANGSTROMS) OF 41-251 IN COMPLEX WITH NAD</scope>
    <scope>FUNCTION</scope>
    <scope>CATALYTIC ACTIVITY</scope>
    <scope>SUBUNIT</scope>
    <scope>MUTAGENESIS OF SER-174; GLN-182; ARG-186 AND GLN-212</scope>
</reference>
<reference key="6">
    <citation type="journal article" date="2004" name="Acta Crystallogr. D">
        <title>C3 exoenzyme from Clostridium botulinum: structure of a tetragonal crystal form and a reassessment of NAD-induced flexure.</title>
        <authorList>
            <person name="Evans H.R."/>
            <person name="Holloway D.E."/>
            <person name="Sutton J.M."/>
            <person name="Ayriss J."/>
            <person name="Shone C.C."/>
            <person name="Acharya K.R."/>
        </authorList>
    </citation>
    <scope>X-RAY CRYSTALLOGRAPHY (1.89 ANGSTROMS) OF 41-251</scope>
    <scope>FUNCTION</scope>
</reference>
<reference key="7">
    <citation type="journal article" date="2005" name="EMBO J.">
        <title>Crystal structure of the C3bot-RalA complex reveals a novel type of action of a bacterial exoenzyme.</title>
        <authorList>
            <person name="Pautsch A."/>
            <person name="Vogelsgesang M."/>
            <person name="Traenkle J."/>
            <person name="Herrmann C."/>
            <person name="Aktories K."/>
        </authorList>
    </citation>
    <scope>X-RAY CRYSTALLOGRAPHY (1.73 ANGSTROMS) OF 41-251 IN COMPLEX WITH NAD AND HUMAN RALA</scope>
    <scope>FUNCTION</scope>
    <scope>MUTAGENESIS OF GLY-99 AND GLU-109</scope>
</reference>
<reference key="8">
    <citation type="journal article" date="2005" name="Proc. Natl. Acad. Sci. U.S.A.">
        <title>Molecular recognition of an ADP-ribosylating Clostridium botulinum C3 exoenzyme by RalA GTPase.</title>
        <authorList>
            <person name="Holbourn K.P."/>
            <person name="Sutton J.M."/>
            <person name="Evans H.R."/>
            <person name="Shone C.C."/>
            <person name="Acharya K.R."/>
        </authorList>
    </citation>
    <scope>X-RAY CRYSTALLOGRAPHY (1.81 ANGSTROMS) OF 41-251 IN COMPLEX WITH HUMAN RALA</scope>
</reference>
<feature type="signal peptide" evidence="7">
    <location>
        <begin position="1"/>
        <end position="40"/>
    </location>
</feature>
<feature type="chain" id="PRO_0000020755" description="Mono-ADP-ribosyltransferase C3">
    <location>
        <begin position="41"/>
        <end position="251"/>
    </location>
</feature>
<feature type="domain" description="TR mART core" evidence="1">
    <location>
        <begin position="47"/>
        <end position="246"/>
    </location>
</feature>
<feature type="active site" evidence="1">
    <location>
        <position position="128"/>
    </location>
</feature>
<feature type="active site" evidence="1">
    <location>
        <position position="174"/>
    </location>
</feature>
<feature type="active site" evidence="1">
    <location>
        <position position="214"/>
    </location>
</feature>
<feature type="binding site" evidence="3 6">
    <location>
        <position position="80"/>
    </location>
    <ligand>
        <name>NAD(+)</name>
        <dbReference type="ChEBI" id="CHEBI:57540"/>
    </ligand>
</feature>
<feature type="binding site" evidence="3 6">
    <location>
        <position position="87"/>
    </location>
    <ligand>
        <name>NAD(+)</name>
        <dbReference type="ChEBI" id="CHEBI:57540"/>
    </ligand>
</feature>
<feature type="binding site" evidence="3 6">
    <location>
        <position position="91"/>
    </location>
    <ligand>
        <name>NAD(+)</name>
        <dbReference type="ChEBI" id="CHEBI:57540"/>
    </ligand>
</feature>
<feature type="binding site" evidence="3 6">
    <location>
        <begin position="128"/>
        <end position="131"/>
    </location>
    <ligand>
        <name>NAD(+)</name>
        <dbReference type="ChEBI" id="CHEBI:57540"/>
    </ligand>
</feature>
<feature type="binding site" evidence="3 6">
    <location>
        <begin position="167"/>
        <end position="169"/>
    </location>
    <ligand>
        <name>NAD(+)</name>
        <dbReference type="ChEBI" id="CHEBI:57540"/>
    </ligand>
</feature>
<feature type="binding site" evidence="3 6">
    <location>
        <begin position="183"/>
        <end position="186"/>
    </location>
    <ligand>
        <name>NAD(+)</name>
        <dbReference type="ChEBI" id="CHEBI:57540"/>
    </ligand>
</feature>
<feature type="binding site" evidence="3 6">
    <location>
        <begin position="212"/>
        <end position="214"/>
    </location>
    <ligand>
        <name>NAD(+)</name>
        <dbReference type="ChEBI" id="CHEBI:57540"/>
    </ligand>
</feature>
<feature type="site" description="Transition state stabilizer">
    <location>
        <position position="214"/>
    </location>
</feature>
<feature type="mutagenesis site" description="Reduces interaction with human RALA." evidence="6">
    <original>G</original>
    <variation>D</variation>
    <location>
        <position position="99"/>
    </location>
</feature>
<feature type="mutagenesis site" description="Loss of interaction with human RALA." evidence="6">
    <original>E</original>
    <variation>A</variation>
    <location>
        <position position="109"/>
    </location>
</feature>
<feature type="mutagenesis site" description="No effect on enzyme activity." evidence="3">
    <original>S</original>
    <variation>A</variation>
    <location>
        <position position="174"/>
    </location>
</feature>
<feature type="mutagenesis site" description="No effect on NAD binding. No effect on enzyme activity." evidence="3">
    <original>Q</original>
    <variation>A</variation>
    <location>
        <position position="182"/>
    </location>
</feature>
<feature type="mutagenesis site" description="Loss of NAD binding and loss of activity." evidence="3">
    <original>R</original>
    <variation>E</variation>
    <location>
        <position position="186"/>
    </location>
</feature>
<feature type="mutagenesis site" description="Reduces affinity for NAD 2-fold. No effect on enzyme activity." evidence="3">
    <original>Q</original>
    <variation>A</variation>
    <location>
        <position position="212"/>
    </location>
</feature>
<feature type="helix" evidence="9">
    <location>
        <begin position="52"/>
        <end position="66"/>
    </location>
</feature>
<feature type="helix" evidence="9">
    <location>
        <begin position="70"/>
        <end position="92"/>
    </location>
</feature>
<feature type="turn" evidence="9">
    <location>
        <begin position="93"/>
        <end position="95"/>
    </location>
</feature>
<feature type="helix" evidence="9">
    <location>
        <begin position="102"/>
        <end position="114"/>
    </location>
</feature>
<feature type="helix" evidence="11">
    <location>
        <begin position="115"/>
        <end position="117"/>
    </location>
</feature>
<feature type="strand" evidence="9">
    <location>
        <begin position="124"/>
        <end position="130"/>
    </location>
</feature>
<feature type="helix" evidence="9">
    <location>
        <begin position="132"/>
        <end position="135"/>
    </location>
</feature>
<feature type="turn" evidence="9">
    <location>
        <begin position="137"/>
        <end position="142"/>
    </location>
</feature>
<feature type="strand" evidence="11">
    <location>
        <begin position="148"/>
        <end position="150"/>
    </location>
</feature>
<feature type="helix" evidence="9">
    <location>
        <begin position="152"/>
        <end position="162"/>
    </location>
</feature>
<feature type="strand" evidence="9">
    <location>
        <begin position="166"/>
        <end position="171"/>
    </location>
</feature>
<feature type="strand" evidence="9">
    <location>
        <begin position="173"/>
        <end position="178"/>
    </location>
</feature>
<feature type="strand" evidence="9">
    <location>
        <begin position="183"/>
        <end position="194"/>
    </location>
</feature>
<feature type="turn" evidence="9">
    <location>
        <begin position="204"/>
        <end position="206"/>
    </location>
</feature>
<feature type="turn" evidence="10">
    <location>
        <begin position="208"/>
        <end position="211"/>
    </location>
</feature>
<feature type="strand" evidence="9">
    <location>
        <begin position="214"/>
        <end position="217"/>
    </location>
</feature>
<feature type="strand" evidence="9">
    <location>
        <begin position="219"/>
        <end position="230"/>
    </location>
</feature>
<feature type="turn" evidence="9">
    <location>
        <begin position="232"/>
        <end position="234"/>
    </location>
</feature>
<feature type="strand" evidence="9">
    <location>
        <begin position="237"/>
        <end position="247"/>
    </location>
</feature>
<organismHost>
    <name type="scientific">Clostridium botulinum</name>
    <dbReference type="NCBI Taxonomy" id="1491"/>
</organismHost>
<gene>
    <name type="primary">C3</name>
</gene>
<dbReference type="EC" id="2.4.2.-" evidence="3"/>
<dbReference type="EMBL" id="X59040">
    <property type="protein sequence ID" value="CAA41768.1"/>
    <property type="molecule type" value="Genomic_DNA"/>
</dbReference>
<dbReference type="EMBL" id="X51464">
    <property type="protein sequence ID" value="CAA35828.1"/>
    <property type="molecule type" value="Genomic_DNA"/>
</dbReference>
<dbReference type="EMBL" id="X59039">
    <property type="protein sequence ID" value="CAA41767.1"/>
    <property type="molecule type" value="Genomic_DNA"/>
</dbReference>
<dbReference type="PDB" id="1G24">
    <property type="method" value="X-ray"/>
    <property type="resolution" value="1.70 A"/>
    <property type="chains" value="A/B/C/D=41-251"/>
</dbReference>
<dbReference type="PDB" id="1GZE">
    <property type="method" value="X-ray"/>
    <property type="resolution" value="2.70 A"/>
    <property type="chains" value="A/B/C/D=41-251"/>
</dbReference>
<dbReference type="PDB" id="1GZF">
    <property type="method" value="X-ray"/>
    <property type="resolution" value="1.95 A"/>
    <property type="chains" value="A/B/C/D=41-251"/>
</dbReference>
<dbReference type="PDB" id="1UZI">
    <property type="method" value="X-ray"/>
    <property type="resolution" value="1.89 A"/>
    <property type="chains" value="A/B=41-251"/>
</dbReference>
<dbReference type="PDB" id="2A78">
    <property type="method" value="X-ray"/>
    <property type="resolution" value="1.81 A"/>
    <property type="chains" value="B=41-251"/>
</dbReference>
<dbReference type="PDB" id="2A9K">
    <property type="method" value="X-ray"/>
    <property type="resolution" value="1.73 A"/>
    <property type="chains" value="B=41-251"/>
</dbReference>
<dbReference type="PDB" id="2BOV">
    <property type="method" value="X-ray"/>
    <property type="resolution" value="2.66 A"/>
    <property type="chains" value="B=1-251"/>
</dbReference>
<dbReference type="PDB" id="2C89">
    <property type="method" value="X-ray"/>
    <property type="resolution" value="1.85 A"/>
    <property type="chains" value="A/B/C/D=41-251"/>
</dbReference>
<dbReference type="PDB" id="2C8A">
    <property type="method" value="X-ray"/>
    <property type="resolution" value="1.70 A"/>
    <property type="chains" value="A/B/C/D=41-251"/>
</dbReference>
<dbReference type="PDB" id="2C8B">
    <property type="method" value="X-ray"/>
    <property type="resolution" value="1.70 A"/>
    <property type="chains" value="X=41-251"/>
</dbReference>
<dbReference type="PDB" id="2C8C">
    <property type="method" value="X-ray"/>
    <property type="resolution" value="2.70 A"/>
    <property type="chains" value="A/B/C/D=41-251"/>
</dbReference>
<dbReference type="PDB" id="2C8D">
    <property type="method" value="X-ray"/>
    <property type="resolution" value="2.20 A"/>
    <property type="chains" value="A/B/C/D=41-251"/>
</dbReference>
<dbReference type="PDB" id="2C8E">
    <property type="method" value="X-ray"/>
    <property type="resolution" value="1.60 A"/>
    <property type="chains" value="E/F/G=41-251"/>
</dbReference>
<dbReference type="PDB" id="2C8F">
    <property type="method" value="X-ray"/>
    <property type="resolution" value="2.50 A"/>
    <property type="chains" value="E/F/G=41-251"/>
</dbReference>
<dbReference type="PDB" id="2C8G">
    <property type="method" value="X-ray"/>
    <property type="resolution" value="2.00 A"/>
    <property type="chains" value="A/B/C/D=41-251"/>
</dbReference>
<dbReference type="PDB" id="2C8H">
    <property type="method" value="X-ray"/>
    <property type="resolution" value="1.65 A"/>
    <property type="chains" value="A/B/C/D=41-251"/>
</dbReference>
<dbReference type="PDBsum" id="1G24"/>
<dbReference type="PDBsum" id="1GZE"/>
<dbReference type="PDBsum" id="1GZF"/>
<dbReference type="PDBsum" id="1UZI"/>
<dbReference type="PDBsum" id="2A78"/>
<dbReference type="PDBsum" id="2A9K"/>
<dbReference type="PDBsum" id="2BOV"/>
<dbReference type="PDBsum" id="2C89"/>
<dbReference type="PDBsum" id="2C8A"/>
<dbReference type="PDBsum" id="2C8B"/>
<dbReference type="PDBsum" id="2C8C"/>
<dbReference type="PDBsum" id="2C8D"/>
<dbReference type="PDBsum" id="2C8E"/>
<dbReference type="PDBsum" id="2C8F"/>
<dbReference type="PDBsum" id="2C8G"/>
<dbReference type="PDBsum" id="2C8H"/>
<dbReference type="SMR" id="P15879"/>
<dbReference type="IntAct" id="P15879">
    <property type="interactions" value="1"/>
</dbReference>
<dbReference type="DrugBank" id="DB02147">
    <property type="generic name" value="Cyclo-Tetrametavanadate"/>
</dbReference>
<dbReference type="KEGG" id="vg:3773098"/>
<dbReference type="EvolutionaryTrace" id="P15879"/>
<dbReference type="GO" id="GO:0005576">
    <property type="term" value="C:extracellular region"/>
    <property type="evidence" value="ECO:0007669"/>
    <property type="project" value="UniProtKB-SubCell"/>
</dbReference>
<dbReference type="GO" id="GO:1990404">
    <property type="term" value="F:NAD+-protein mono-ADP-ribosyltransferase activity"/>
    <property type="evidence" value="ECO:0007669"/>
    <property type="project" value="InterPro"/>
</dbReference>
<dbReference type="GO" id="GO:0016779">
    <property type="term" value="F:nucleotidyltransferase activity"/>
    <property type="evidence" value="ECO:0007669"/>
    <property type="project" value="UniProtKB-KW"/>
</dbReference>
<dbReference type="CDD" id="cd00233">
    <property type="entry name" value="VIP2"/>
    <property type="match status" value="1"/>
</dbReference>
<dbReference type="Gene3D" id="3.90.176.10">
    <property type="entry name" value="Toxin ADP-ribosyltransferase, Chain A, domain 1"/>
    <property type="match status" value="1"/>
</dbReference>
<dbReference type="InterPro" id="IPR003540">
    <property type="entry name" value="ADP-ribosyltransferase"/>
</dbReference>
<dbReference type="InterPro" id="IPR016678">
    <property type="entry name" value="Mono-ADP_RibTrfase_C3/Edin"/>
</dbReference>
<dbReference type="Pfam" id="PF03496">
    <property type="entry name" value="ADPrib_exo_Tox"/>
    <property type="match status" value="1"/>
</dbReference>
<dbReference type="PIRSF" id="PIRSF016951">
    <property type="entry name" value="MADP_ribosyltransf_Edin"/>
    <property type="match status" value="1"/>
</dbReference>
<dbReference type="SUPFAM" id="SSF56399">
    <property type="entry name" value="ADP-ribosylation"/>
    <property type="match status" value="1"/>
</dbReference>
<dbReference type="PROSITE" id="PS51996">
    <property type="entry name" value="TR_MART"/>
    <property type="match status" value="1"/>
</dbReference>
<name>ARC3_CBDP</name>
<proteinExistence type="evidence at protein level"/>
<sequence>MKGLRKSILCLVLSAGVIAPVTSGMIQSPQKCYAYSINQKAYSNTYQEFTNIDQAKAWGNAQYKKYGLSKSEKEAIVSYTKSASEINGKLRQNKGVINGFPSNLIKQVELLDKSFNKMKTPENIMLFRGDDPAYLGTEFQNTLLNSNGTINKTAFEKAKAKFLNKDRLEYGYISTSLMNVSQFAGRPIITKFKVAKGSKAGYIDPISAFAGQLEMLLPRHSTYHIDDMRLSSDGKQIIITATMMGTAINPK</sequence>
<keyword id="KW-0002">3D-structure</keyword>
<keyword id="KW-0903">Direct protein sequencing</keyword>
<keyword id="KW-0328">Glycosyltransferase</keyword>
<keyword id="KW-0945">Host-virus interaction</keyword>
<keyword id="KW-0520">NAD</keyword>
<keyword id="KW-0548">Nucleotidyltransferase</keyword>
<keyword id="KW-0964">Secreted</keyword>
<keyword id="KW-0732">Signal</keyword>
<keyword id="KW-0808">Transferase</keyword>